<keyword id="KW-0217">Developmental protein</keyword>
<keyword id="KW-0221">Differentiation</keyword>
<keyword id="KW-0325">Glycoprotein</keyword>
<keyword id="KW-0379">Hydroxylation</keyword>
<keyword id="KW-1185">Reference proteome</keyword>
<keyword id="KW-0964">Secreted</keyword>
<sequence length="97" mass="10790">TRTDDKPGVNRNMEMQQQQGGFIGHRPRLASFNRASKQLDREKRPVPSGPDPIHHSIPSHAPQHPPSYGKAPYEDDKSIASPGLSNLIGPPPFLDRY</sequence>
<organism>
    <name type="scientific">Zea mays</name>
    <name type="common">Maize</name>
    <dbReference type="NCBI Taxonomy" id="4577"/>
    <lineage>
        <taxon>Eukaryota</taxon>
        <taxon>Viridiplantae</taxon>
        <taxon>Streptophyta</taxon>
        <taxon>Embryophyta</taxon>
        <taxon>Tracheophyta</taxon>
        <taxon>Spermatophyta</taxon>
        <taxon>Magnoliopsida</taxon>
        <taxon>Liliopsida</taxon>
        <taxon>Poales</taxon>
        <taxon>Poaceae</taxon>
        <taxon>PACMAD clade</taxon>
        <taxon>Panicoideae</taxon>
        <taxon>Andropogonodae</taxon>
        <taxon>Andropogoneae</taxon>
        <taxon>Tripsacinae</taxon>
        <taxon>Zea</taxon>
    </lineage>
</organism>
<feature type="chain" id="PRO_0000401227" description="CLAVATA3/ESR (CLE)-related protein ESR2-C">
    <location>
        <begin position="1" status="less than"/>
        <end position="97"/>
    </location>
</feature>
<feature type="peptide" id="PRO_0000401228" description="ESR2Cp" evidence="1">
    <location>
        <begin position="44"/>
        <end position="55"/>
    </location>
</feature>
<feature type="region of interest" description="Disordered" evidence="2">
    <location>
        <begin position="1"/>
        <end position="97"/>
    </location>
</feature>
<feature type="modified residue" description="Hydroxyproline" evidence="1">
    <location>
        <position position="47"/>
    </location>
</feature>
<feature type="modified residue" description="Hydroxyproline" evidence="1">
    <location>
        <position position="50"/>
    </location>
</feature>
<feature type="glycosylation site" description="O-linked (Ara...) hydroxyproline" evidence="1">
    <location>
        <position position="50"/>
    </location>
</feature>
<feature type="non-terminal residue">
    <location>
        <position position="1"/>
    </location>
</feature>
<reference key="1">
    <citation type="journal article" date="1997" name="Plant J.">
        <title>ZmEsr, a novel endosperm-specific gene expressed in a restricted region around the maize embryo.</title>
        <authorList>
            <person name="Opsahl-Ferstad H.G."/>
            <person name="Le Deunff E."/>
            <person name="Dumas C."/>
            <person name="Rogowsky P.M."/>
        </authorList>
    </citation>
    <scope>NUCLEOTIDE SEQUENCE [MRNA]</scope>
    <scope>TISSUE SPECIFICITY</scope>
    <scope>DEVELOPMENTAL STAGE</scope>
    <source>
        <strain>cv. A188</strain>
        <tissue>Endosperm</tissue>
    </source>
</reference>
<reference key="2">
    <citation type="journal article" date="2008" name="Cell. Mol. Life Sci.">
        <title>The CLE family of plant polypeptide signaling molecules.</title>
        <authorList>
            <person name="Jun J.H."/>
            <person name="Fiume E."/>
            <person name="Fletcher J.C."/>
        </authorList>
    </citation>
    <scope>REVIEW</scope>
</reference>
<reference key="3">
    <citation type="journal article" date="2010" name="Protoplasma">
        <title>CLE peptide signaling during plant development.</title>
        <authorList>
            <person name="Wang G."/>
            <person name="Fiers M."/>
        </authorList>
    </citation>
    <scope>REVIEW</scope>
</reference>
<gene>
    <name evidence="4" type="primary">ESR2C</name>
    <name evidence="4" type="synonym">ESRa1</name>
</gene>
<comment type="function">
    <molecule>ESR2Cp</molecule>
    <text evidence="1">Extracellular signal peptide that regulates cell fate.</text>
</comment>
<comment type="subcellular location">
    <molecule>ESR2Cp</molecule>
    <subcellularLocation>
        <location evidence="1">Secreted</location>
        <location evidence="1">Extracellular space</location>
    </subcellularLocation>
</comment>
<comment type="tissue specificity">
    <molecule>ESR2Cp</molecule>
    <text evidence="3">Seed endosperm.</text>
</comment>
<comment type="developmental stage">
    <molecule>ESR2Cp</molecule>
    <text evidence="3">Expressed specifically in the embryo surrounding region at the micropylar end of the seed endosperm at early stages (4 to 7 days after pollination, DAP) and ever-decreasing parts of the suspensor at subsequent stages.</text>
</comment>
<comment type="PTM">
    <molecule>ESR2Cp</molecule>
    <text evidence="1">The O-glycosylation (arabinosylation) of the hydroxyproline Pro-50 enhances binding affinity of the ESR2Cp peptide for its receptor.</text>
</comment>
<comment type="similarity">
    <text evidence="5">Belongs to the CLV3/ESR signal peptide family.</text>
</comment>
<protein>
    <recommendedName>
        <fullName evidence="4">CLAVATA3/ESR (CLE)-related protein ESR2-C</fullName>
    </recommendedName>
    <alternativeName>
        <fullName evidence="4">Embryo surrounding region protein 2-C</fullName>
    </alternativeName>
    <component>
        <recommendedName>
            <fullName evidence="4">ESR2Cp</fullName>
        </recommendedName>
    </component>
</protein>
<name>ESR2C_MAIZE</name>
<accession>O24572</accession>
<dbReference type="EMBL" id="X98495">
    <property type="protein sequence ID" value="CAA67121.1"/>
    <property type="molecule type" value="mRNA"/>
</dbReference>
<dbReference type="PIR" id="T03940">
    <property type="entry name" value="T03940"/>
</dbReference>
<dbReference type="GlyCosmos" id="O24572">
    <property type="glycosylation" value="1 site, No reported glycans"/>
</dbReference>
<dbReference type="MaizeGDB" id="247970"/>
<dbReference type="InParanoid" id="O24572"/>
<dbReference type="Proteomes" id="UP000007305">
    <property type="component" value="Unplaced"/>
</dbReference>
<dbReference type="ExpressionAtlas" id="O24572">
    <property type="expression patterns" value="baseline and differential"/>
</dbReference>
<dbReference type="GO" id="GO:0048046">
    <property type="term" value="C:apoplast"/>
    <property type="evidence" value="ECO:0000250"/>
    <property type="project" value="UniProtKB"/>
</dbReference>
<dbReference type="GO" id="GO:0033612">
    <property type="term" value="F:receptor serine/threonine kinase binding"/>
    <property type="evidence" value="ECO:0000250"/>
    <property type="project" value="UniProtKB"/>
</dbReference>
<dbReference type="GO" id="GO:0045168">
    <property type="term" value="P:cell-cell signaling involved in cell fate commitment"/>
    <property type="evidence" value="ECO:0000250"/>
    <property type="project" value="UniProtKB"/>
</dbReference>
<proteinExistence type="evidence at transcript level"/>
<evidence type="ECO:0000250" key="1">
    <source>
        <dbReference type="UniProtKB" id="O49519"/>
    </source>
</evidence>
<evidence type="ECO:0000256" key="2">
    <source>
        <dbReference type="SAM" id="MobiDB-lite"/>
    </source>
</evidence>
<evidence type="ECO:0000269" key="3">
    <source>
    </source>
</evidence>
<evidence type="ECO:0000303" key="4">
    <source>
    </source>
</evidence>
<evidence type="ECO:0000305" key="5"/>